<comment type="caution">
    <text evidence="2">Product of a dubious gene prediction unlikely to encode a functional protein. Because of that it is not part of the S.cerevisiae S288c complete/reference proteome set.</text>
</comment>
<organism>
    <name type="scientific">Saccharomyces cerevisiae (strain ATCC 204508 / S288c)</name>
    <name type="common">Baker's yeast</name>
    <dbReference type="NCBI Taxonomy" id="559292"/>
    <lineage>
        <taxon>Eukaryota</taxon>
        <taxon>Fungi</taxon>
        <taxon>Dikarya</taxon>
        <taxon>Ascomycota</taxon>
        <taxon>Saccharomycotina</taxon>
        <taxon>Saccharomycetes</taxon>
        <taxon>Saccharomycetales</taxon>
        <taxon>Saccharomycetaceae</taxon>
        <taxon>Saccharomyces</taxon>
    </lineage>
</organism>
<proteinExistence type="uncertain"/>
<protein>
    <recommendedName>
        <fullName>Putative uncharacterized protein YPL025C</fullName>
    </recommendedName>
</protein>
<name>YP025_YEAST</name>
<accession>Q02659</accession>
<dbReference type="EMBL" id="U36624">
    <property type="protein sequence ID" value="AAB68162.1"/>
    <property type="molecule type" value="Genomic_DNA"/>
</dbReference>
<dbReference type="PIR" id="S63457">
    <property type="entry name" value="S63457"/>
</dbReference>
<dbReference type="DIP" id="DIP-1446N"/>
<dbReference type="IntAct" id="Q02659">
    <property type="interactions" value="1"/>
</dbReference>
<dbReference type="MINT" id="Q02659"/>
<dbReference type="STRING" id="4932.YPL025C"/>
<dbReference type="PaxDb" id="4932-YPL025C"/>
<dbReference type="EnsemblFungi" id="YPL025C_mRNA">
    <property type="protein sequence ID" value="YPL025C"/>
    <property type="gene ID" value="YPL025C"/>
</dbReference>
<dbReference type="AGR" id="SGD:S000005946"/>
<dbReference type="SGD" id="S000005946">
    <property type="gene designation" value="YPL025C"/>
</dbReference>
<dbReference type="HOGENOM" id="CLU_1462436_0_0_1"/>
<dbReference type="OMA" id="CFSARDM"/>
<sequence>MSSYLRHCSSRLPGKTCSRERNNFPLRLSGGISGEGIHPGFPIRMVQYAALALSTCCFSARDMDIDAPRGVSFLGIKWLAANQTRGMWDGSTISSPHTHVFRDISRTDSFFLFFFFFASHEIGTYLSAEESALDRYLSRFCGERESWDKCKKEMVGTKGQYTGPAVPSVPTTNLNDIGDPTKTVQ</sequence>
<reference key="1">
    <citation type="journal article" date="1997" name="Nature">
        <title>The nucleotide sequence of Saccharomyces cerevisiae chromosome XVI.</title>
        <authorList>
            <person name="Bussey H."/>
            <person name="Storms R.K."/>
            <person name="Ahmed A."/>
            <person name="Albermann K."/>
            <person name="Allen E."/>
            <person name="Ansorge W."/>
            <person name="Araujo R."/>
            <person name="Aparicio A."/>
            <person name="Barrell B.G."/>
            <person name="Badcock K."/>
            <person name="Benes V."/>
            <person name="Botstein D."/>
            <person name="Bowman S."/>
            <person name="Brueckner M."/>
            <person name="Carpenter J."/>
            <person name="Cherry J.M."/>
            <person name="Chung E."/>
            <person name="Churcher C.M."/>
            <person name="Coster F."/>
            <person name="Davis K."/>
            <person name="Davis R.W."/>
            <person name="Dietrich F.S."/>
            <person name="Delius H."/>
            <person name="DiPaolo T."/>
            <person name="Dubois E."/>
            <person name="Duesterhoeft A."/>
            <person name="Duncan M."/>
            <person name="Floeth M."/>
            <person name="Fortin N."/>
            <person name="Friesen J.D."/>
            <person name="Fritz C."/>
            <person name="Goffeau A."/>
            <person name="Hall J."/>
            <person name="Hebling U."/>
            <person name="Heumann K."/>
            <person name="Hilbert H."/>
            <person name="Hillier L.W."/>
            <person name="Hunicke-Smith S."/>
            <person name="Hyman R.W."/>
            <person name="Johnston M."/>
            <person name="Kalman S."/>
            <person name="Kleine K."/>
            <person name="Komp C."/>
            <person name="Kurdi O."/>
            <person name="Lashkari D."/>
            <person name="Lew H."/>
            <person name="Lin A."/>
            <person name="Lin D."/>
            <person name="Louis E.J."/>
            <person name="Marathe R."/>
            <person name="Messenguy F."/>
            <person name="Mewes H.-W."/>
            <person name="Mirtipati S."/>
            <person name="Moestl D."/>
            <person name="Mueller-Auer S."/>
            <person name="Namath A."/>
            <person name="Nentwich U."/>
            <person name="Oefner P."/>
            <person name="Pearson D."/>
            <person name="Petel F.X."/>
            <person name="Pohl T.M."/>
            <person name="Purnelle B."/>
            <person name="Rajandream M.A."/>
            <person name="Rechmann S."/>
            <person name="Rieger M."/>
            <person name="Riles L."/>
            <person name="Roberts D."/>
            <person name="Schaefer M."/>
            <person name="Scharfe M."/>
            <person name="Scherens B."/>
            <person name="Schramm S."/>
            <person name="Schroeder M."/>
            <person name="Sdicu A.-M."/>
            <person name="Tettelin H."/>
            <person name="Urrestarazu L.A."/>
            <person name="Ushinsky S."/>
            <person name="Vierendeels F."/>
            <person name="Vissers S."/>
            <person name="Voss H."/>
            <person name="Walsh S.V."/>
            <person name="Wambutt R."/>
            <person name="Wang Y."/>
            <person name="Wedler E."/>
            <person name="Wedler H."/>
            <person name="Winnett E."/>
            <person name="Zhong W.-W."/>
            <person name="Zollner A."/>
            <person name="Vo D.H."/>
            <person name="Hani J."/>
        </authorList>
    </citation>
    <scope>NUCLEOTIDE SEQUENCE [LARGE SCALE GENOMIC DNA]</scope>
    <source>
        <strain>ATCC 204508 / S288c</strain>
    </source>
</reference>
<reference key="2">
    <citation type="journal article" date="2014" name="G3 (Bethesda)">
        <title>The reference genome sequence of Saccharomyces cerevisiae: Then and now.</title>
        <authorList>
            <person name="Engel S.R."/>
            <person name="Dietrich F.S."/>
            <person name="Fisk D.G."/>
            <person name="Binkley G."/>
            <person name="Balakrishnan R."/>
            <person name="Costanzo M.C."/>
            <person name="Dwight S.S."/>
            <person name="Hitz B.C."/>
            <person name="Karra K."/>
            <person name="Nash R.S."/>
            <person name="Weng S."/>
            <person name="Wong E.D."/>
            <person name="Lloyd P."/>
            <person name="Skrzypek M.S."/>
            <person name="Miyasato S.R."/>
            <person name="Simison M."/>
            <person name="Cherry J.M."/>
        </authorList>
    </citation>
    <scope>GENOME REANNOTATION</scope>
    <source>
        <strain>ATCC 204508 / S288c</strain>
    </source>
</reference>
<evidence type="ECO:0000256" key="1">
    <source>
        <dbReference type="SAM" id="MobiDB-lite"/>
    </source>
</evidence>
<evidence type="ECO:0000305" key="2">
    <source>
    </source>
</evidence>
<gene>
    <name type="ordered locus">YPL025C</name>
    <name type="ORF">LPB6</name>
</gene>
<feature type="chain" id="PRO_0000299797" description="Putative uncharacterized protein YPL025C">
    <location>
        <begin position="1"/>
        <end position="185"/>
    </location>
</feature>
<feature type="region of interest" description="Disordered" evidence="1">
    <location>
        <begin position="160"/>
        <end position="185"/>
    </location>
</feature>